<proteinExistence type="inferred from homology"/>
<sequence>MAVNVNTNVSAMTAQRYLTSATNAQQSSMERLSSGYKINSAKDDAAGLQISNRLNVQSRGLGVAVRNANDGISMAQTAEGAMKETTNILQRMRDLSLQSANGSNSKADRVAIQEEITALNDELNRVAETTSFGGNKLLNGTFATKSFQIGADNGEAVMLNIKDMRSDNALMGGKTYQAANGKDKNWGVEAGKTDLTITLKDKREGDVTISINAKEGDDIEELATYINGQTDMIKASVDEEGKLQLFTDNNRIDGAATFGGALAGELGIGAAQDVTVDTLDVTTVGGAQESVAIVDAALKYVDSHRAELGAFQNRFNHAINNLDNINENVNASKSRIKDTDFAKETTALTKAQILSQASSSVLAQAKQAPNSALALLG</sequence>
<accession>A5F671</accession>
<accession>C3M3E4</accession>
<accession>O34221</accession>
<reference key="1">
    <citation type="journal article" date="1998" name="J. Bacteriol.">
        <title>Differential regulation of multiple flagellins in Vibrio cholerae.</title>
        <authorList>
            <person name="Klose K.E."/>
            <person name="Mekalanos J.J."/>
        </authorList>
    </citation>
    <scope>NUCLEOTIDE SEQUENCE [GENOMIC DNA]</scope>
</reference>
<reference key="2">
    <citation type="submission" date="2007-03" db="EMBL/GenBank/DDBJ databases">
        <authorList>
            <person name="Heidelberg J."/>
        </authorList>
    </citation>
    <scope>NUCLEOTIDE SEQUENCE [LARGE SCALE GENOMIC DNA]</scope>
    <source>
        <strain>ATCC 39541 / Classical Ogawa 395 / O395</strain>
    </source>
</reference>
<reference key="3">
    <citation type="journal article" date="2008" name="PLoS ONE">
        <title>A recalibrated molecular clock and independent origins for the cholera pandemic clones.</title>
        <authorList>
            <person name="Feng L."/>
            <person name="Reeves P.R."/>
            <person name="Lan R."/>
            <person name="Ren Y."/>
            <person name="Gao C."/>
            <person name="Zhou Z."/>
            <person name="Ren Y."/>
            <person name="Cheng J."/>
            <person name="Wang W."/>
            <person name="Wang J."/>
            <person name="Qian W."/>
            <person name="Li D."/>
            <person name="Wang L."/>
        </authorList>
    </citation>
    <scope>NUCLEOTIDE SEQUENCE [LARGE SCALE GENOMIC DNA]</scope>
    <source>
        <strain>ATCC 39541 / Classical Ogawa 395 / O395</strain>
    </source>
</reference>
<protein>
    <recommendedName>
        <fullName>Flagellin C</fullName>
    </recommendedName>
</protein>
<dbReference type="EMBL" id="AF007121">
    <property type="protein sequence ID" value="AAC01553.1"/>
    <property type="molecule type" value="Genomic_DNA"/>
</dbReference>
<dbReference type="EMBL" id="CP000627">
    <property type="protein sequence ID" value="ABQ21841.1"/>
    <property type="molecule type" value="Genomic_DNA"/>
</dbReference>
<dbReference type="EMBL" id="CP001235">
    <property type="protein sequence ID" value="ACP10293.1"/>
    <property type="molecule type" value="Genomic_DNA"/>
</dbReference>
<dbReference type="RefSeq" id="WP_000290380.1">
    <property type="nucleotide sequence ID" value="NZ_JAACZH010000022.1"/>
</dbReference>
<dbReference type="SMR" id="A5F671"/>
<dbReference type="KEGG" id="vco:VC0395_A1779"/>
<dbReference type="KEGG" id="vcr:VC395_2303"/>
<dbReference type="PATRIC" id="fig|345073.21.peg.2219"/>
<dbReference type="eggNOG" id="COG1344">
    <property type="taxonomic scope" value="Bacteria"/>
</dbReference>
<dbReference type="HOGENOM" id="CLU_011142_4_0_6"/>
<dbReference type="OrthoDB" id="9796789at2"/>
<dbReference type="Proteomes" id="UP000000249">
    <property type="component" value="Chromosome 2"/>
</dbReference>
<dbReference type="GO" id="GO:0009288">
    <property type="term" value="C:bacterial-type flagellum"/>
    <property type="evidence" value="ECO:0007669"/>
    <property type="project" value="UniProtKB-SubCell"/>
</dbReference>
<dbReference type="GO" id="GO:0005576">
    <property type="term" value="C:extracellular region"/>
    <property type="evidence" value="ECO:0007669"/>
    <property type="project" value="UniProtKB-SubCell"/>
</dbReference>
<dbReference type="GO" id="GO:0005198">
    <property type="term" value="F:structural molecule activity"/>
    <property type="evidence" value="ECO:0007669"/>
    <property type="project" value="InterPro"/>
</dbReference>
<dbReference type="Gene3D" id="3.30.70.2120">
    <property type="match status" value="1"/>
</dbReference>
<dbReference type="Gene3D" id="1.20.1330.10">
    <property type="entry name" value="f41 fragment of flagellin, N-terminal domain"/>
    <property type="match status" value="1"/>
</dbReference>
<dbReference type="Gene3D" id="6.10.10.10">
    <property type="entry name" value="Flagellar export chaperone, C-terminal domain"/>
    <property type="match status" value="1"/>
</dbReference>
<dbReference type="InterPro" id="IPR001492">
    <property type="entry name" value="Flagellin"/>
</dbReference>
<dbReference type="InterPro" id="IPR046358">
    <property type="entry name" value="Flagellin_C"/>
</dbReference>
<dbReference type="InterPro" id="IPR042187">
    <property type="entry name" value="Flagellin_C_sub2"/>
</dbReference>
<dbReference type="InterPro" id="IPR010810">
    <property type="entry name" value="Flagellin_hook_IN_motif"/>
</dbReference>
<dbReference type="InterPro" id="IPR001029">
    <property type="entry name" value="Flagellin_N"/>
</dbReference>
<dbReference type="NCBIfam" id="NF006466">
    <property type="entry name" value="PRK08869.1-1"/>
    <property type="match status" value="1"/>
</dbReference>
<dbReference type="NCBIfam" id="NF006468">
    <property type="entry name" value="PRK08869.1-3"/>
    <property type="match status" value="1"/>
</dbReference>
<dbReference type="PANTHER" id="PTHR42792">
    <property type="entry name" value="FLAGELLIN"/>
    <property type="match status" value="1"/>
</dbReference>
<dbReference type="PANTHER" id="PTHR42792:SF2">
    <property type="entry name" value="FLAGELLIN"/>
    <property type="match status" value="1"/>
</dbReference>
<dbReference type="Pfam" id="PF00700">
    <property type="entry name" value="Flagellin_C"/>
    <property type="match status" value="1"/>
</dbReference>
<dbReference type="Pfam" id="PF07196">
    <property type="entry name" value="Flagellin_IN"/>
    <property type="match status" value="1"/>
</dbReference>
<dbReference type="Pfam" id="PF00669">
    <property type="entry name" value="Flagellin_N"/>
    <property type="match status" value="1"/>
</dbReference>
<dbReference type="PRINTS" id="PR00207">
    <property type="entry name" value="FLAGELLIN"/>
</dbReference>
<dbReference type="SUPFAM" id="SSF64518">
    <property type="entry name" value="Phase 1 flagellin"/>
    <property type="match status" value="1"/>
</dbReference>
<keyword id="KW-0975">Bacterial flagellum</keyword>
<keyword id="KW-0175">Coiled coil</keyword>
<keyword id="KW-0964">Secreted</keyword>
<organism>
    <name type="scientific">Vibrio cholerae serotype O1 (strain ATCC 39541 / Classical Ogawa 395 / O395)</name>
    <dbReference type="NCBI Taxonomy" id="345073"/>
    <lineage>
        <taxon>Bacteria</taxon>
        <taxon>Pseudomonadati</taxon>
        <taxon>Pseudomonadota</taxon>
        <taxon>Gammaproteobacteria</taxon>
        <taxon>Vibrionales</taxon>
        <taxon>Vibrionaceae</taxon>
        <taxon>Vibrio</taxon>
    </lineage>
</organism>
<gene>
    <name type="primary">flaC</name>
    <name type="ordered locus">VC0395_A1779</name>
    <name type="ordered locus">VC395_2303</name>
</gene>
<feature type="chain" id="PRO_0000321848" description="Flagellin C">
    <location>
        <begin position="1"/>
        <end position="377"/>
    </location>
</feature>
<feature type="coiled-coil region" evidence="1">
    <location>
        <begin position="103"/>
        <end position="129"/>
    </location>
</feature>
<feature type="coiled-coil region" evidence="1">
    <location>
        <begin position="301"/>
        <end position="340"/>
    </location>
</feature>
<comment type="function">
    <text>Flagellin is the subunit protein which polymerizes to form the filaments of bacterial flagella. FlaC is not essential for flagellar synthesis and motility.</text>
</comment>
<comment type="subunit">
    <text>Heteromer of multiple flagellin subunits including FlaA, FlaB, FlaC, FlaD and FlaE.</text>
</comment>
<comment type="subcellular location">
    <subcellularLocation>
        <location>Secreted</location>
    </subcellularLocation>
    <subcellularLocation>
        <location>Bacterial flagellum</location>
    </subcellularLocation>
</comment>
<comment type="miscellaneous">
    <text>V.cholerae is able to differentially regulate the flagellins within the flagellum maybe to produce flagella which are particularly suited for motility within a given environment.</text>
</comment>
<comment type="similarity">
    <text evidence="2">Belongs to the bacterial flagellin family.</text>
</comment>
<name>FLAC_VIBC3</name>
<evidence type="ECO:0000255" key="1"/>
<evidence type="ECO:0000305" key="2"/>